<reference evidence="7" key="1">
    <citation type="submission" date="2009-12" db="UniProtKB">
        <title>Detection of parvalbumins in fish protein extracts and fish containing products with scFv-antibodies.</title>
        <authorList>
            <person name="Kostadinova M."/>
            <person name="Bublin M."/>
            <person name="Radauer C."/>
            <person name="Briza P."/>
            <person name="Breiteneder H."/>
        </authorList>
    </citation>
    <scope>PROTEIN SEQUENCE</scope>
    <scope>FUNCTION</scope>
    <scope>MASS SPECTROMETRY</scope>
    <scope>ALLERGEN</scope>
    <scope>ACETYLATION AT SER-1</scope>
    <source>
        <tissue evidence="5">Muscle</tissue>
    </source>
</reference>
<keyword id="KW-0007">Acetylation</keyword>
<keyword id="KW-0020">Allergen</keyword>
<keyword id="KW-0106">Calcium</keyword>
<keyword id="KW-0903">Direct protein sequencing</keyword>
<keyword id="KW-0479">Metal-binding</keyword>
<keyword id="KW-0514">Muscle protein</keyword>
<keyword id="KW-0677">Repeat</keyword>
<evidence type="ECO:0000250" key="1">
    <source>
        <dbReference type="UniProtKB" id="P02621"/>
    </source>
</evidence>
<evidence type="ECO:0000250" key="2">
    <source>
        <dbReference type="UniProtKB" id="Q91483"/>
    </source>
</evidence>
<evidence type="ECO:0000255" key="3"/>
<evidence type="ECO:0000255" key="4">
    <source>
        <dbReference type="PROSITE-ProRule" id="PRU00448"/>
    </source>
</evidence>
<evidence type="ECO:0000269" key="5">
    <source ref="1"/>
</evidence>
<evidence type="ECO:0000303" key="6">
    <source ref="1"/>
</evidence>
<evidence type="ECO:0000305" key="7"/>
<sequence>SFAGLNDADVAAALAACAAADSFNHKAFFAKXXXXXXSPDDLKKXXXXLDQDKSGFLEEDELKLFLQNFSASARALTDAETKXXXXAGDADGDGMLGLDEFAVLVKQ</sequence>
<protein>
    <recommendedName>
        <fullName evidence="2 6">Parvalbumin beta 2</fullName>
    </recommendedName>
</protein>
<organism>
    <name type="scientific">Oncorhynchus mykiss</name>
    <name type="common">Rainbow trout</name>
    <name type="synonym">Salmo gairdneri</name>
    <dbReference type="NCBI Taxonomy" id="8022"/>
    <lineage>
        <taxon>Eukaryota</taxon>
        <taxon>Metazoa</taxon>
        <taxon>Chordata</taxon>
        <taxon>Craniata</taxon>
        <taxon>Vertebrata</taxon>
        <taxon>Euteleostomi</taxon>
        <taxon>Actinopterygii</taxon>
        <taxon>Neopterygii</taxon>
        <taxon>Teleostei</taxon>
        <taxon>Protacanthopterygii</taxon>
        <taxon>Salmoniformes</taxon>
        <taxon>Salmonidae</taxon>
        <taxon>Salmoninae</taxon>
        <taxon>Oncorhynchus</taxon>
    </lineage>
</organism>
<dbReference type="Allergome" id="8150">
    <property type="allergen name" value="Onc m 1"/>
</dbReference>
<dbReference type="Allergome" id="9515">
    <property type="allergen name" value="Onc m 1.0201"/>
</dbReference>
<dbReference type="Proteomes" id="UP000694395">
    <property type="component" value="Unplaced"/>
</dbReference>
<dbReference type="GO" id="GO:0016528">
    <property type="term" value="C:sarcoplasm"/>
    <property type="evidence" value="ECO:0000314"/>
    <property type="project" value="AgBase"/>
</dbReference>
<dbReference type="GO" id="GO:0005509">
    <property type="term" value="F:calcium ion binding"/>
    <property type="evidence" value="ECO:0000314"/>
    <property type="project" value="AgBase"/>
</dbReference>
<dbReference type="Gene3D" id="1.10.238.10">
    <property type="entry name" value="EF-hand"/>
    <property type="match status" value="1"/>
</dbReference>
<dbReference type="InterPro" id="IPR011992">
    <property type="entry name" value="EF-hand-dom_pair"/>
</dbReference>
<dbReference type="InterPro" id="IPR018247">
    <property type="entry name" value="EF_Hand_1_Ca_BS"/>
</dbReference>
<dbReference type="InterPro" id="IPR002048">
    <property type="entry name" value="EF_hand_dom"/>
</dbReference>
<dbReference type="InterPro" id="IPR008080">
    <property type="entry name" value="Parvalbumin"/>
</dbReference>
<dbReference type="PANTHER" id="PTHR11653:SF12">
    <property type="entry name" value="PARVALBUMIN"/>
    <property type="match status" value="1"/>
</dbReference>
<dbReference type="PANTHER" id="PTHR11653">
    <property type="entry name" value="PARVALBUMIN ALPHA"/>
    <property type="match status" value="1"/>
</dbReference>
<dbReference type="Pfam" id="PF13499">
    <property type="entry name" value="EF-hand_7"/>
    <property type="match status" value="1"/>
</dbReference>
<dbReference type="PRINTS" id="PR01697">
    <property type="entry name" value="PARVALBUMIN"/>
</dbReference>
<dbReference type="SUPFAM" id="SSF47473">
    <property type="entry name" value="EF-hand"/>
    <property type="match status" value="1"/>
</dbReference>
<dbReference type="PROSITE" id="PS00018">
    <property type="entry name" value="EF_HAND_1"/>
    <property type="match status" value="2"/>
</dbReference>
<dbReference type="PROSITE" id="PS50222">
    <property type="entry name" value="EF_HAND_2"/>
    <property type="match status" value="2"/>
</dbReference>
<accession>P86432</accession>
<name>PRVB2_ONCMY</name>
<proteinExistence type="evidence at protein level"/>
<comment type="function">
    <text evidence="5">In muscle, parvalbumin is thought to be involved in relaxation after contraction. It binds two calcium ions.</text>
</comment>
<comment type="mass spectrometry"/>
<comment type="allergen">
    <text evidence="5">Causes an allergic reaction in human.</text>
</comment>
<comment type="similarity">
    <text evidence="3">Belongs to the parvalbumin family.</text>
</comment>
<feature type="chain" id="PRO_0000391422" description="Parvalbumin beta 2">
    <location>
        <begin position="1"/>
        <end position="107"/>
    </location>
</feature>
<feature type="domain" description="EF-hand 1" evidence="4">
    <location>
        <begin position="37"/>
        <end position="72"/>
    </location>
</feature>
<feature type="domain" description="EF-hand 2" evidence="4">
    <location>
        <begin position="89"/>
        <end position="107"/>
    </location>
</feature>
<feature type="binding site" evidence="1 4">
    <location>
        <position position="50"/>
    </location>
    <ligand>
        <name>Ca(2+)</name>
        <dbReference type="ChEBI" id="CHEBI:29108"/>
        <label>1</label>
    </ligand>
</feature>
<feature type="binding site" evidence="1 4">
    <location>
        <position position="52"/>
    </location>
    <ligand>
        <name>Ca(2+)</name>
        <dbReference type="ChEBI" id="CHEBI:29108"/>
        <label>1</label>
    </ligand>
</feature>
<feature type="binding site" evidence="1 4">
    <location>
        <position position="54"/>
    </location>
    <ligand>
        <name>Ca(2+)</name>
        <dbReference type="ChEBI" id="CHEBI:29108"/>
        <label>1</label>
    </ligand>
</feature>
<feature type="binding site" evidence="1">
    <location>
        <position position="56"/>
    </location>
    <ligand>
        <name>Ca(2+)</name>
        <dbReference type="ChEBI" id="CHEBI:29108"/>
        <label>1</label>
    </ligand>
</feature>
<feature type="binding site" evidence="1">
    <location>
        <position position="58"/>
    </location>
    <ligand>
        <name>Ca(2+)</name>
        <dbReference type="ChEBI" id="CHEBI:29108"/>
        <label>1</label>
    </ligand>
</feature>
<feature type="binding site" evidence="1 4">
    <location>
        <position position="61"/>
    </location>
    <ligand>
        <name>Ca(2+)</name>
        <dbReference type="ChEBI" id="CHEBI:29108"/>
        <label>1</label>
    </ligand>
</feature>
<feature type="binding site" evidence="1 4">
    <location>
        <position position="89"/>
    </location>
    <ligand>
        <name>Ca(2+)</name>
        <dbReference type="ChEBI" id="CHEBI:29108"/>
        <label>2</label>
    </ligand>
</feature>
<feature type="binding site" evidence="1 4">
    <location>
        <position position="91"/>
    </location>
    <ligand>
        <name>Ca(2+)</name>
        <dbReference type="ChEBI" id="CHEBI:29108"/>
        <label>2</label>
    </ligand>
</feature>
<feature type="binding site" evidence="1 4">
    <location>
        <position position="93"/>
    </location>
    <ligand>
        <name>Ca(2+)</name>
        <dbReference type="ChEBI" id="CHEBI:29108"/>
        <label>2</label>
    </ligand>
</feature>
<feature type="binding site" evidence="4">
    <location>
        <position position="95"/>
    </location>
    <ligand>
        <name>Ca(2+)</name>
        <dbReference type="ChEBI" id="CHEBI:29108"/>
        <label>2</label>
    </ligand>
</feature>
<feature type="binding site" evidence="1 4">
    <location>
        <position position="100"/>
    </location>
    <ligand>
        <name>Ca(2+)</name>
        <dbReference type="ChEBI" id="CHEBI:29108"/>
        <label>2</label>
    </ligand>
</feature>
<feature type="modified residue" description="N-acetylserine" evidence="5">
    <location>
        <position position="1"/>
    </location>
</feature>
<feature type="unsure residue" description="L or I" evidence="5">
    <location>
        <position position="5"/>
    </location>
</feature>
<feature type="unsure residue" description="L or I" evidence="5">
    <location>
        <position position="14"/>
    </location>
</feature>
<feature type="unsure residue" description="L or I" evidence="5">
    <location>
        <position position="42"/>
    </location>
</feature>
<feature type="unsure residue" description="L or I" evidence="5">
    <location>
        <position position="49"/>
    </location>
</feature>
<feature type="unsure residue" description="L or I" evidence="5">
    <location>
        <position position="57"/>
    </location>
</feature>
<feature type="unsure residue" description="L or I" evidence="5">
    <location>
        <position position="62"/>
    </location>
</feature>
<feature type="unsure residue" description="L or I" evidence="5">
    <location>
        <position position="64"/>
    </location>
</feature>
<feature type="unsure residue" description="L or I" evidence="5">
    <location>
        <position position="66"/>
    </location>
</feature>
<feature type="unsure residue" description="L or I" evidence="5">
    <location>
        <position position="76"/>
    </location>
</feature>
<feature type="unsure residue" description="L or I" evidence="5">
    <location>
        <position position="96"/>
    </location>
</feature>
<feature type="unsure residue" description="L or I" evidence="5">
    <location>
        <position position="98"/>
    </location>
</feature>
<feature type="unsure residue" description="L or I" evidence="5">
    <location>
        <position position="104"/>
    </location>
</feature>